<name>TRM1_HHV2H</name>
<keyword id="KW-0067">ATP-binding</keyword>
<keyword id="KW-1048">Host nucleus</keyword>
<keyword id="KW-0426">Late protein</keyword>
<keyword id="KW-0479">Metal-binding</keyword>
<keyword id="KW-0547">Nucleotide-binding</keyword>
<keyword id="KW-1185">Reference proteome</keyword>
<keyword id="KW-0231">Viral genome packaging</keyword>
<keyword id="KW-1188">Viral release from host cell</keyword>
<keyword id="KW-0862">Zinc</keyword>
<keyword id="KW-0863">Zinc-finger</keyword>
<reference key="1">
    <citation type="journal article" date="1991" name="J. Gen. Virol.">
        <title>Comparative sequence analysis of the long repeat regions and adjoining parts of the long unique regions in the genomes of herpes simplex viruses types 1 and 2.</title>
        <authorList>
            <person name="McGeoch D.J."/>
            <person name="Cunningham C."/>
            <person name="McIntyre G."/>
            <person name="Dolan A."/>
        </authorList>
    </citation>
    <scope>NUCLEOTIDE SEQUENCE [LARGE SCALE GENOMIC DNA]</scope>
</reference>
<evidence type="ECO:0000255" key="1">
    <source>
        <dbReference type="HAMAP-Rule" id="MF_04014"/>
    </source>
</evidence>
<evidence type="ECO:0000256" key="2">
    <source>
        <dbReference type="SAM" id="MobiDB-lite"/>
    </source>
</evidence>
<gene>
    <name evidence="1" type="primary">TRM1</name>
    <name type="ordered locus">UL28</name>
</gene>
<comment type="function">
    <text evidence="1">Component of the molecular motor that translocates viral genomic DNA in empty capsid during DNA packaging. Forms a tripartite terminase complex together with TRM2 and TRM3 in the host cytoplasm. Once the complex reaches the host nucleus, it interacts with the capsid portal vertex. This portal forms a ring in which genomic DNA is translocated into the capsid. TRM1 carries an endonuclease activity that plays an important role for the cleavage of concatemeric viral DNA into unit length genomes.</text>
</comment>
<comment type="subunit">
    <text evidence="1">Associates with TRM2 and TRM3 to form the tripartite terminase complex. Interacts with portal protein.</text>
</comment>
<comment type="subcellular location">
    <subcellularLocation>
        <location evidence="1">Host nucleus</location>
    </subcellularLocation>
    <text evidence="1">Found associated with the external surface of the viral capsid during assembly and DNA packaging, but seems absent in extracellular mature virions.</text>
</comment>
<comment type="similarity">
    <text evidence="1">Belongs to the herpesviridae TRM1 protein family.</text>
</comment>
<feature type="chain" id="PRO_0000406175" description="Tripartite terminase subunit 1">
    <location>
        <begin position="1"/>
        <end position="785"/>
    </location>
</feature>
<feature type="zinc finger region" description="C3H1-type" evidence="1">
    <location>
        <begin position="201"/>
        <end position="229"/>
    </location>
</feature>
<feature type="region of interest" description="Disordered" evidence="2">
    <location>
        <begin position="439"/>
        <end position="487"/>
    </location>
</feature>
<feature type="compositionally biased region" description="Basic and acidic residues" evidence="2">
    <location>
        <begin position="450"/>
        <end position="459"/>
    </location>
</feature>
<feature type="binding site" evidence="1">
    <location>
        <begin position="696"/>
        <end position="703"/>
    </location>
    <ligand>
        <name>ATP</name>
        <dbReference type="ChEBI" id="CHEBI:30616"/>
    </ligand>
</feature>
<organism>
    <name type="scientific">Human herpesvirus 2 (strain HG52)</name>
    <name type="common">HHV-2</name>
    <name type="synonym">Human herpes simplex virus 2</name>
    <dbReference type="NCBI Taxonomy" id="10315"/>
    <lineage>
        <taxon>Viruses</taxon>
        <taxon>Duplodnaviria</taxon>
        <taxon>Heunggongvirae</taxon>
        <taxon>Peploviricota</taxon>
        <taxon>Herviviricetes</taxon>
        <taxon>Herpesvirales</taxon>
        <taxon>Orthoherpesviridae</taxon>
        <taxon>Alphaherpesvirinae</taxon>
        <taxon>Simplexvirus</taxon>
        <taxon>Simplexvirus humanalpha2</taxon>
        <taxon>Human herpesvirus 2</taxon>
    </lineage>
</organism>
<proteinExistence type="inferred from homology"/>
<dbReference type="EMBL" id="Z86099">
    <property type="protein sequence ID" value="CAB06753.1"/>
    <property type="molecule type" value="Genomic_DNA"/>
</dbReference>
<dbReference type="RefSeq" id="YP_009137180.1">
    <property type="nucleotide sequence ID" value="NC_001798.2"/>
</dbReference>
<dbReference type="SMR" id="P89451"/>
<dbReference type="GeneID" id="1487313"/>
<dbReference type="KEGG" id="vg:1487313"/>
<dbReference type="Proteomes" id="UP000001874">
    <property type="component" value="Segment"/>
</dbReference>
<dbReference type="GO" id="GO:0042025">
    <property type="term" value="C:host cell nucleus"/>
    <property type="evidence" value="ECO:0007669"/>
    <property type="project" value="UniProtKB-SubCell"/>
</dbReference>
<dbReference type="GO" id="GO:0005524">
    <property type="term" value="F:ATP binding"/>
    <property type="evidence" value="ECO:0007669"/>
    <property type="project" value="UniProtKB-KW"/>
</dbReference>
<dbReference type="GO" id="GO:0008270">
    <property type="term" value="F:zinc ion binding"/>
    <property type="evidence" value="ECO:0007669"/>
    <property type="project" value="UniProtKB-KW"/>
</dbReference>
<dbReference type="GO" id="GO:0019073">
    <property type="term" value="P:viral DNA genome packaging"/>
    <property type="evidence" value="ECO:0007669"/>
    <property type="project" value="InterPro"/>
</dbReference>
<dbReference type="HAMAP" id="MF_04014">
    <property type="entry name" value="HSV_TRM1"/>
    <property type="match status" value="1"/>
</dbReference>
<dbReference type="InterPro" id="IPR000501">
    <property type="entry name" value="UL28/UL56"/>
</dbReference>
<dbReference type="Pfam" id="PF01366">
    <property type="entry name" value="PRTP"/>
    <property type="match status" value="1"/>
</dbReference>
<sequence>MAAAPPAAVSEPTAARQKLLALLGQVQTYVFQLELLRRCDPQIGLGKLAQLKLNALQVRVLRRHLRPGLEAQAAAFLTPLSVTLELLLEYAWREGERLLGHLETFATTGDVSAFFTETMGLARPCPYHQQIRLQTYGGDVRMELCFLHDVENFLKQLNYCHLITPPSGATAALERVREFMVAAVGSGLIVPPELSDPSHPCAVCFEELCVTANQGATIARRLADRICNHVTQQAQVRLDANELRRYLPHAAGLSDAARARALCVLDQALARTAAGGGARAGPPPADSSSVREEADALLEAHDVFQATTPGLYAISELRFWLASGDRARHSTMDAFADNLNALAQRELQQETAAVAVELALFGRRAEHFDRAFGGHLAALDMVDALIIGGQATSPDDQIEALIRACYDHHLTTPLLRRLVSPEQCDEEALRRVLARLGAGGATGGAEEEEPRAAAEEGGRRRGAGTPASEDGERGPEPGAQGPESWGDIATRAAADVRERRRLYADRLTKRSLASLGRCVREQRGELEKMLRVSVHGEVLPATFAAVANGFAARARFCALTAGAGTVIDNRAAPGVFDAHRFMRASLLRHQVDPALLPSITHRFFELVNGPLFDHSTHSFAQPPNTALYYSVENVGLLPHLKEELARFIMGAGGSGADWAVSEFQKFYCFDGVSGITPTQRAAWRYIRELIIATTLFASVYRCGELELRRPDCSRPTSEGLYRYPPGVYLTYNSDCPLVAIVESGPDGCIGPRSVVVYDRDVFSILYSVLQHLAPRLAGGGSDAPP</sequence>
<accession>P89451</accession>
<protein>
    <recommendedName>
        <fullName evidence="1">Tripartite terminase subunit 1</fullName>
    </recommendedName>
</protein>
<organismHost>
    <name type="scientific">Homo sapiens</name>
    <name type="common">Human</name>
    <dbReference type="NCBI Taxonomy" id="9606"/>
</organismHost>